<reference key="1">
    <citation type="submission" date="2001-07" db="EMBL/GenBank/DDBJ databases">
        <title>Genome-wide discovery and analysis of human seven transmembrane helix receptor genes.</title>
        <authorList>
            <person name="Suwa M."/>
            <person name="Sato T."/>
            <person name="Okouchi I."/>
            <person name="Arita M."/>
            <person name="Futami K."/>
            <person name="Matsumoto S."/>
            <person name="Tsutsumi S."/>
            <person name="Aburatani H."/>
            <person name="Asai K."/>
            <person name="Akiyama Y."/>
        </authorList>
    </citation>
    <scope>NUCLEOTIDE SEQUENCE [GENOMIC DNA]</scope>
</reference>
<reference key="2">
    <citation type="submission" date="2005-09" db="EMBL/GenBank/DDBJ databases">
        <authorList>
            <person name="Mural R.J."/>
            <person name="Istrail S."/>
            <person name="Sutton G.G."/>
            <person name="Florea L."/>
            <person name="Halpern A.L."/>
            <person name="Mobarry C.M."/>
            <person name="Lippert R."/>
            <person name="Walenz B."/>
            <person name="Shatkay H."/>
            <person name="Dew I."/>
            <person name="Miller J.R."/>
            <person name="Flanigan M.J."/>
            <person name="Edwards N.J."/>
            <person name="Bolanos R."/>
            <person name="Fasulo D."/>
            <person name="Halldorsson B.V."/>
            <person name="Hannenhalli S."/>
            <person name="Turner R."/>
            <person name="Yooseph S."/>
            <person name="Lu F."/>
            <person name="Nusskern D.R."/>
            <person name="Shue B.C."/>
            <person name="Zheng X.H."/>
            <person name="Zhong F."/>
            <person name="Delcher A.L."/>
            <person name="Huson D.H."/>
            <person name="Kravitz S.A."/>
            <person name="Mouchard L."/>
            <person name="Reinert K."/>
            <person name="Remington K.A."/>
            <person name="Clark A.G."/>
            <person name="Waterman M.S."/>
            <person name="Eichler E.E."/>
            <person name="Adams M.D."/>
            <person name="Hunkapiller M.W."/>
            <person name="Myers E.W."/>
            <person name="Venter J.C."/>
        </authorList>
    </citation>
    <scope>NUCLEOTIDE SEQUENCE [LARGE SCALE GENOMIC DNA]</scope>
</reference>
<reference key="3">
    <citation type="journal article" date="2004" name="Genome Res.">
        <title>The status, quality, and expansion of the NIH full-length cDNA project: the Mammalian Gene Collection (MGC).</title>
        <authorList>
            <consortium name="The MGC Project Team"/>
        </authorList>
    </citation>
    <scope>NUCLEOTIDE SEQUENCE [LARGE SCALE MRNA]</scope>
    <source>
        <tissue>Testis</tissue>
    </source>
</reference>
<reference key="4">
    <citation type="journal article" date="2002" name="Genomics">
        <title>DEFOG: a practical scheme for deciphering families of genes.</title>
        <authorList>
            <person name="Fuchs T."/>
            <person name="Malecova B."/>
            <person name="Linhart C."/>
            <person name="Sharan R."/>
            <person name="Khen M."/>
            <person name="Herwig R."/>
            <person name="Shmulevich D."/>
            <person name="Elkon R."/>
            <person name="Steinfath M."/>
            <person name="O'Brien J.K."/>
            <person name="Radelof U."/>
            <person name="Lehrach H."/>
            <person name="Lancet D."/>
            <person name="Shamir R."/>
        </authorList>
    </citation>
    <scope>NUCLEOTIDE SEQUENCE [GENOMIC DNA] OF 68-284</scope>
</reference>
<reference key="5">
    <citation type="journal article" date="2004" name="Proc. Natl. Acad. Sci. U.S.A.">
        <title>The human olfactory receptor gene family.</title>
        <authorList>
            <person name="Malnic B."/>
            <person name="Godfrey P.A."/>
            <person name="Buck L.B."/>
        </authorList>
    </citation>
    <scope>IDENTIFICATION</scope>
</reference>
<reference key="6">
    <citation type="journal article" date="2004" name="Proc. Natl. Acad. Sci. U.S.A.">
        <authorList>
            <person name="Malnic B."/>
            <person name="Godfrey P.A."/>
            <person name="Buck L.B."/>
        </authorList>
    </citation>
    <scope>ERRATUM OF PUBMED:14983052</scope>
</reference>
<evidence type="ECO:0000255" key="1"/>
<evidence type="ECO:0000255" key="2">
    <source>
        <dbReference type="PROSITE-ProRule" id="PRU00521"/>
    </source>
</evidence>
<evidence type="ECO:0000305" key="3"/>
<dbReference type="EMBL" id="AB065930">
    <property type="protein sequence ID" value="BAC06145.1"/>
    <property type="molecule type" value="Genomic_DNA"/>
</dbReference>
<dbReference type="EMBL" id="CH471139">
    <property type="protein sequence ID" value="EAW68902.1"/>
    <property type="molecule type" value="Genomic_DNA"/>
</dbReference>
<dbReference type="EMBL" id="BC137046">
    <property type="protein sequence ID" value="AAI37047.1"/>
    <property type="molecule type" value="mRNA"/>
</dbReference>
<dbReference type="EMBL" id="BC151149">
    <property type="protein sequence ID" value="AAI51150.1"/>
    <property type="molecule type" value="mRNA"/>
</dbReference>
<dbReference type="EMBL" id="AF399619">
    <property type="protein sequence ID" value="AAK95104.1"/>
    <property type="molecule type" value="Genomic_DNA"/>
</dbReference>
<dbReference type="EMBL" id="BK004262">
    <property type="protein sequence ID" value="DAA04660.1"/>
    <property type="molecule type" value="Genomic_DNA"/>
</dbReference>
<dbReference type="CCDS" id="CCDS32895.1"/>
<dbReference type="RefSeq" id="NP_001004699.1">
    <property type="nucleotide sequence ID" value="NM_001004699.3"/>
</dbReference>
<dbReference type="SMR" id="Q8NG97"/>
<dbReference type="BioGRID" id="129854">
    <property type="interactions" value="1"/>
</dbReference>
<dbReference type="FunCoup" id="Q8NG97">
    <property type="interactions" value="451"/>
</dbReference>
<dbReference type="STRING" id="9606.ENSP00000493322"/>
<dbReference type="GlyCosmos" id="Q8NG97">
    <property type="glycosylation" value="1 site, No reported glycans"/>
</dbReference>
<dbReference type="GlyGen" id="Q8NG97">
    <property type="glycosylation" value="1 site"/>
</dbReference>
<dbReference type="iPTMnet" id="Q8NG97"/>
<dbReference type="PhosphoSitePlus" id="Q8NG97"/>
<dbReference type="BioMuta" id="OR2Z1"/>
<dbReference type="DMDM" id="38372648"/>
<dbReference type="MassIVE" id="Q8NG97"/>
<dbReference type="PaxDb" id="9606-ENSP00000316284"/>
<dbReference type="Antibodypedia" id="53129">
    <property type="antibodies" value="86 antibodies from 22 providers"/>
</dbReference>
<dbReference type="DNASU" id="284383"/>
<dbReference type="Ensembl" id="ENST00000641125.1">
    <property type="protein sequence ID" value="ENSP00000493322.1"/>
    <property type="gene ID" value="ENSG00000181733.4"/>
</dbReference>
<dbReference type="GeneID" id="284383"/>
<dbReference type="KEGG" id="hsa:284383"/>
<dbReference type="MANE-Select" id="ENST00000641125.1">
    <property type="protein sequence ID" value="ENSP00000493322.1"/>
    <property type="RefSeq nucleotide sequence ID" value="NM_001004699.3"/>
    <property type="RefSeq protein sequence ID" value="NP_001004699.1"/>
</dbReference>
<dbReference type="UCSC" id="uc010xkg.3">
    <property type="organism name" value="human"/>
</dbReference>
<dbReference type="AGR" id="HGNC:15391"/>
<dbReference type="CTD" id="284383"/>
<dbReference type="DisGeNET" id="284383"/>
<dbReference type="GeneCards" id="OR2Z1"/>
<dbReference type="HGNC" id="HGNC:15391">
    <property type="gene designation" value="OR2Z1"/>
</dbReference>
<dbReference type="HPA" id="ENSG00000181733">
    <property type="expression patterns" value="Not detected"/>
</dbReference>
<dbReference type="MalaCards" id="OR2Z1"/>
<dbReference type="neXtProt" id="NX_Q8NG97"/>
<dbReference type="OpenTargets" id="ENSG00000181733"/>
<dbReference type="PharmGKB" id="PA32221"/>
<dbReference type="VEuPathDB" id="HostDB:ENSG00000181733"/>
<dbReference type="eggNOG" id="ENOG502SMQD">
    <property type="taxonomic scope" value="Eukaryota"/>
</dbReference>
<dbReference type="GeneTree" id="ENSGT01130000278260"/>
<dbReference type="HOGENOM" id="CLU_012526_1_2_1"/>
<dbReference type="InParanoid" id="Q8NG97"/>
<dbReference type="OMA" id="IFFLTMM"/>
<dbReference type="OrthoDB" id="9828669at2759"/>
<dbReference type="PAN-GO" id="Q8NG97">
    <property type="GO annotations" value="0 GO annotations based on evolutionary models"/>
</dbReference>
<dbReference type="PhylomeDB" id="Q8NG97"/>
<dbReference type="TreeFam" id="TF337295"/>
<dbReference type="PathwayCommons" id="Q8NG97"/>
<dbReference type="Reactome" id="R-HSA-9752946">
    <property type="pathway name" value="Expression and translocation of olfactory receptors"/>
</dbReference>
<dbReference type="BioGRID-ORCS" id="284383">
    <property type="hits" value="14 hits in 741 CRISPR screens"/>
</dbReference>
<dbReference type="ChiTaRS" id="OR2Z1">
    <property type="organism name" value="human"/>
</dbReference>
<dbReference type="GeneWiki" id="OR2Z1"/>
<dbReference type="GenomeRNAi" id="284383"/>
<dbReference type="Pharos" id="Q8NG97">
    <property type="development level" value="Tdark"/>
</dbReference>
<dbReference type="PRO" id="PR:Q8NG97"/>
<dbReference type="Proteomes" id="UP000005640">
    <property type="component" value="Chromosome 19"/>
</dbReference>
<dbReference type="RNAct" id="Q8NG97">
    <property type="molecule type" value="protein"/>
</dbReference>
<dbReference type="ExpressionAtlas" id="Q8NG97">
    <property type="expression patterns" value="baseline and differential"/>
</dbReference>
<dbReference type="GO" id="GO:0005886">
    <property type="term" value="C:plasma membrane"/>
    <property type="evidence" value="ECO:0000318"/>
    <property type="project" value="GO_Central"/>
</dbReference>
<dbReference type="GO" id="GO:0004930">
    <property type="term" value="F:G protein-coupled receptor activity"/>
    <property type="evidence" value="ECO:0007669"/>
    <property type="project" value="UniProtKB-KW"/>
</dbReference>
<dbReference type="GO" id="GO:0004984">
    <property type="term" value="F:olfactory receptor activity"/>
    <property type="evidence" value="ECO:0000318"/>
    <property type="project" value="GO_Central"/>
</dbReference>
<dbReference type="GO" id="GO:0050911">
    <property type="term" value="P:detection of chemical stimulus involved in sensory perception of smell"/>
    <property type="evidence" value="ECO:0000318"/>
    <property type="project" value="GO_Central"/>
</dbReference>
<dbReference type="CDD" id="cd15421">
    <property type="entry name" value="7tmA_OR2T-like"/>
    <property type="match status" value="1"/>
</dbReference>
<dbReference type="FunFam" id="1.20.1070.10:FF:000008">
    <property type="entry name" value="Olfactory receptor"/>
    <property type="match status" value="1"/>
</dbReference>
<dbReference type="Gene3D" id="1.20.1070.10">
    <property type="entry name" value="Rhodopsin 7-helix transmembrane proteins"/>
    <property type="match status" value="1"/>
</dbReference>
<dbReference type="InterPro" id="IPR000276">
    <property type="entry name" value="GPCR_Rhodpsn"/>
</dbReference>
<dbReference type="InterPro" id="IPR017452">
    <property type="entry name" value="GPCR_Rhodpsn_7TM"/>
</dbReference>
<dbReference type="InterPro" id="IPR000725">
    <property type="entry name" value="Olfact_rcpt"/>
</dbReference>
<dbReference type="PANTHER" id="PTHR26453">
    <property type="entry name" value="OLFACTORY RECEPTOR"/>
    <property type="match status" value="1"/>
</dbReference>
<dbReference type="Pfam" id="PF13853">
    <property type="entry name" value="7tm_4"/>
    <property type="match status" value="1"/>
</dbReference>
<dbReference type="PRINTS" id="PR00237">
    <property type="entry name" value="GPCRRHODOPSN"/>
</dbReference>
<dbReference type="PRINTS" id="PR00245">
    <property type="entry name" value="OLFACTORYR"/>
</dbReference>
<dbReference type="SUPFAM" id="SSF81321">
    <property type="entry name" value="Family A G protein-coupled receptor-like"/>
    <property type="match status" value="1"/>
</dbReference>
<dbReference type="PROSITE" id="PS00237">
    <property type="entry name" value="G_PROTEIN_RECEP_F1_1"/>
    <property type="match status" value="1"/>
</dbReference>
<dbReference type="PROSITE" id="PS50262">
    <property type="entry name" value="G_PROTEIN_RECEP_F1_2"/>
    <property type="match status" value="1"/>
</dbReference>
<feature type="chain" id="PRO_0000150514" description="Olfactory receptor 2Z1">
    <location>
        <begin position="1"/>
        <end position="314"/>
    </location>
</feature>
<feature type="topological domain" description="Extracellular" evidence="1">
    <location>
        <begin position="1"/>
        <end position="25"/>
    </location>
</feature>
<feature type="transmembrane region" description="Helical; Name=1" evidence="1">
    <location>
        <begin position="26"/>
        <end position="49"/>
    </location>
</feature>
<feature type="topological domain" description="Cytoplasmic" evidence="1">
    <location>
        <begin position="50"/>
        <end position="57"/>
    </location>
</feature>
<feature type="transmembrane region" description="Helical; Name=2" evidence="1">
    <location>
        <begin position="58"/>
        <end position="79"/>
    </location>
</feature>
<feature type="topological domain" description="Extracellular" evidence="1">
    <location>
        <begin position="80"/>
        <end position="100"/>
    </location>
</feature>
<feature type="transmembrane region" description="Helical; Name=3" evidence="1">
    <location>
        <begin position="101"/>
        <end position="120"/>
    </location>
</feature>
<feature type="topological domain" description="Cytoplasmic" evidence="1">
    <location>
        <begin position="121"/>
        <end position="139"/>
    </location>
</feature>
<feature type="transmembrane region" description="Helical; Name=4" evidence="1">
    <location>
        <begin position="140"/>
        <end position="158"/>
    </location>
</feature>
<feature type="topological domain" description="Extracellular" evidence="1">
    <location>
        <begin position="159"/>
        <end position="195"/>
    </location>
</feature>
<feature type="transmembrane region" description="Helical; Name=5" evidence="1">
    <location>
        <begin position="196"/>
        <end position="219"/>
    </location>
</feature>
<feature type="topological domain" description="Cytoplasmic" evidence="1">
    <location>
        <begin position="220"/>
        <end position="236"/>
    </location>
</feature>
<feature type="transmembrane region" description="Helical; Name=6" evidence="1">
    <location>
        <begin position="237"/>
        <end position="259"/>
    </location>
</feature>
<feature type="topological domain" description="Extracellular" evidence="1">
    <location>
        <begin position="260"/>
        <end position="272"/>
    </location>
</feature>
<feature type="transmembrane region" description="Helical; Name=7" evidence="1">
    <location>
        <begin position="273"/>
        <end position="292"/>
    </location>
</feature>
<feature type="topological domain" description="Cytoplasmic" evidence="1">
    <location>
        <begin position="293"/>
        <end position="314"/>
    </location>
</feature>
<feature type="glycosylation site" description="N-linked (GlcNAc...) asparagine" evidence="1">
    <location>
        <position position="5"/>
    </location>
</feature>
<feature type="sequence variant" id="VAR_062031" description="In dbSNP:rs58741481.">
    <original>R</original>
    <variation>C</variation>
    <location>
        <position position="138"/>
    </location>
</feature>
<protein>
    <recommendedName>
        <fullName>Olfactory receptor 2Z1</fullName>
    </recommendedName>
    <alternativeName>
        <fullName>Olfactory receptor 2Z2</fullName>
    </alternativeName>
    <alternativeName>
        <fullName>Olfactory receptor OR19-4</fullName>
    </alternativeName>
</protein>
<keyword id="KW-1003">Cell membrane</keyword>
<keyword id="KW-0297">G-protein coupled receptor</keyword>
<keyword id="KW-0325">Glycoprotein</keyword>
<keyword id="KW-0472">Membrane</keyword>
<keyword id="KW-0552">Olfaction</keyword>
<keyword id="KW-0675">Receptor</keyword>
<keyword id="KW-1185">Reference proteome</keyword>
<keyword id="KW-0716">Sensory transduction</keyword>
<keyword id="KW-0807">Transducer</keyword>
<keyword id="KW-0812">Transmembrane</keyword>
<keyword id="KW-1133">Transmembrane helix</keyword>
<proteinExistence type="evidence at transcript level"/>
<organism>
    <name type="scientific">Homo sapiens</name>
    <name type="common">Human</name>
    <dbReference type="NCBI Taxonomy" id="9606"/>
    <lineage>
        <taxon>Eukaryota</taxon>
        <taxon>Metazoa</taxon>
        <taxon>Chordata</taxon>
        <taxon>Craniata</taxon>
        <taxon>Vertebrata</taxon>
        <taxon>Euteleostomi</taxon>
        <taxon>Mammalia</taxon>
        <taxon>Eutheria</taxon>
        <taxon>Euarchontoglires</taxon>
        <taxon>Primates</taxon>
        <taxon>Haplorrhini</taxon>
        <taxon>Catarrhini</taxon>
        <taxon>Hominidae</taxon>
        <taxon>Homo</taxon>
    </lineage>
</organism>
<gene>
    <name type="primary">OR2Z1</name>
    <name type="synonym">OR2Z2</name>
</gene>
<sequence>MGDVNQSVASDFILVGLFSHSGSRQLLFSLVAVMFVIGLLGNTVLLFLIRVDSRLHTPMYFLLSQLSLFDIGCPMVTIPKMASDFLRGEGATSYGGGAAQIFFLTLMGVAEGVLLVLMSYDRYVAVCQPLQYPVLMRRQVCLLMMGSSWVVGVLNASIQTSITLHFPYCASRIVDHFFCEVPALLKLSCADTCAYEMALSTSGVLILMLPLSLIATSYGHVLQAVLSMRSEEARHKAVTTCSSHITVVGLFYGAAVFMYMVPCAYHSPQQDNVVSLFYSLVTPTLNPLIYSLRNPEVWMALVKVLSRAGLRQMC</sequence>
<comment type="function">
    <text evidence="3">Odorant receptor.</text>
</comment>
<comment type="subcellular location">
    <subcellularLocation>
        <location>Cell membrane</location>
        <topology>Multi-pass membrane protein</topology>
    </subcellularLocation>
</comment>
<comment type="similarity">
    <text evidence="2">Belongs to the G-protein coupled receptor 1 family.</text>
</comment>
<comment type="online information" name="Human Olfactory Receptor Data Exploratorium (HORDE)">
    <link uri="http://genome.weizmann.ac.il/horde/card/index/symbol:OR2Z2"/>
</comment>
<name>OR2Z1_HUMAN</name>
<accession>Q8NG97</accession>
<accession>B9EH50</accession>
<accession>Q6IFK0</accession>
<accession>Q96R25</accession>